<comment type="function">
    <text evidence="1">NDH-1 shuttles electrons from NADH, via FMN and iron-sulfur (Fe-S) centers, to quinones in the respiratory chain. The immediate electron acceptor for the enzyme in this species is believed to be ubiquinone. Couples the redox reaction to proton translocation (for every two electrons transferred, four hydrogen ions are translocated across the cytoplasmic membrane), and thus conserves the redox energy in a proton gradient. This subunit may bind ubiquinone.</text>
</comment>
<comment type="catalytic activity">
    <reaction evidence="1">
        <text>a quinone + NADH + 5 H(+)(in) = a quinol + NAD(+) + 4 H(+)(out)</text>
        <dbReference type="Rhea" id="RHEA:57888"/>
        <dbReference type="ChEBI" id="CHEBI:15378"/>
        <dbReference type="ChEBI" id="CHEBI:24646"/>
        <dbReference type="ChEBI" id="CHEBI:57540"/>
        <dbReference type="ChEBI" id="CHEBI:57945"/>
        <dbReference type="ChEBI" id="CHEBI:132124"/>
    </reaction>
</comment>
<comment type="subunit">
    <text evidence="1">NDH-1 is composed of 14 different subunits. Subunits NuoA, H, J, K, L, M, N constitute the membrane sector of the complex.</text>
</comment>
<comment type="subcellular location">
    <subcellularLocation>
        <location evidence="1">Cell inner membrane</location>
        <topology evidence="1">Multi-pass membrane protein</topology>
    </subcellularLocation>
</comment>
<comment type="similarity">
    <text evidence="1">Belongs to the complex I subunit 1 family.</text>
</comment>
<feature type="chain" id="PRO_0000298818" description="NADH-quinone oxidoreductase subunit H">
    <location>
        <begin position="1"/>
        <end position="329"/>
    </location>
</feature>
<feature type="transmembrane region" description="Helical" evidence="1">
    <location>
        <begin position="9"/>
        <end position="29"/>
    </location>
</feature>
<feature type="transmembrane region" description="Helical" evidence="1">
    <location>
        <begin position="42"/>
        <end position="62"/>
    </location>
</feature>
<feature type="transmembrane region" description="Helical" evidence="1">
    <location>
        <begin position="75"/>
        <end position="95"/>
    </location>
</feature>
<feature type="transmembrane region" description="Helical" evidence="1">
    <location>
        <begin position="117"/>
        <end position="137"/>
    </location>
</feature>
<feature type="transmembrane region" description="Helical" evidence="1">
    <location>
        <begin position="154"/>
        <end position="174"/>
    </location>
</feature>
<feature type="transmembrane region" description="Helical" evidence="1">
    <location>
        <begin position="188"/>
        <end position="208"/>
    </location>
</feature>
<feature type="transmembrane region" description="Helical" evidence="1">
    <location>
        <begin position="238"/>
        <end position="258"/>
    </location>
</feature>
<feature type="transmembrane region" description="Helical" evidence="1">
    <location>
        <begin position="269"/>
        <end position="291"/>
    </location>
</feature>
<feature type="transmembrane region" description="Helical" evidence="1">
    <location>
        <begin position="309"/>
        <end position="329"/>
    </location>
</feature>
<organism>
    <name type="scientific">Helicobacter acinonychis (strain Sheeba)</name>
    <dbReference type="NCBI Taxonomy" id="382638"/>
    <lineage>
        <taxon>Bacteria</taxon>
        <taxon>Pseudomonadati</taxon>
        <taxon>Campylobacterota</taxon>
        <taxon>Epsilonproteobacteria</taxon>
        <taxon>Campylobacterales</taxon>
        <taxon>Helicobacteraceae</taxon>
        <taxon>Helicobacter</taxon>
    </lineage>
</organism>
<name>NUOH_HELAH</name>
<sequence>MSAYIIETLIKILILVAVFSALGGFATYIERKVLAYFQRRLGPSYVGPFGLLQVAADGIKLFTKEDIIPQGANKLIFTLAPIIAMVSAFVSMAPIPFFPNFTLFGYEIKPIISDINIGFLFFLAVGAAGIYAPILAGLASNNKYSLIGSARATIQLLSFEVVSTLTILAPLMVVGSLSLVEINNYQSGGFLDWLVFKQPLAFILFLIASYAELNRTPFDLLEHEAEIVAGYCTEYSGLKWGMFFLAEYAHLFAFSFVISIVFFGGFNAWGFIPGGIAILIKVSFFVFLSMWVRATYPHVRPDQLMNMCWKIMLPLALLNIVLTGVIILI</sequence>
<reference key="1">
    <citation type="journal article" date="2006" name="PLoS Genet.">
        <title>Who ate whom? Adaptive Helicobacter genomic changes that accompanied a host jump from early humans to large felines.</title>
        <authorList>
            <person name="Eppinger M."/>
            <person name="Baar C."/>
            <person name="Linz B."/>
            <person name="Raddatz G."/>
            <person name="Lanz C."/>
            <person name="Keller H."/>
            <person name="Morelli G."/>
            <person name="Gressmann H."/>
            <person name="Achtman M."/>
            <person name="Schuster S.C."/>
        </authorList>
    </citation>
    <scope>NUCLEOTIDE SEQUENCE [LARGE SCALE GENOMIC DNA]</scope>
    <source>
        <strain>Sheeba</strain>
    </source>
</reference>
<proteinExistence type="inferred from homology"/>
<keyword id="KW-0997">Cell inner membrane</keyword>
<keyword id="KW-1003">Cell membrane</keyword>
<keyword id="KW-0472">Membrane</keyword>
<keyword id="KW-0520">NAD</keyword>
<keyword id="KW-0874">Quinone</keyword>
<keyword id="KW-1278">Translocase</keyword>
<keyword id="KW-0812">Transmembrane</keyword>
<keyword id="KW-1133">Transmembrane helix</keyword>
<keyword id="KW-0830">Ubiquinone</keyword>
<accession>Q17Z59</accession>
<gene>
    <name evidence="1" type="primary">nuoH</name>
    <name type="ordered locus">Hac_0217</name>
</gene>
<dbReference type="EC" id="7.1.1.-" evidence="1"/>
<dbReference type="EMBL" id="AM260522">
    <property type="protein sequence ID" value="CAJ99067.1"/>
    <property type="molecule type" value="Genomic_DNA"/>
</dbReference>
<dbReference type="RefSeq" id="WP_011577183.1">
    <property type="nucleotide sequence ID" value="NC_008229.1"/>
</dbReference>
<dbReference type="SMR" id="Q17Z59"/>
<dbReference type="STRING" id="382638.Hac_0217"/>
<dbReference type="GeneID" id="31757740"/>
<dbReference type="KEGG" id="hac:Hac_0217"/>
<dbReference type="eggNOG" id="COG1005">
    <property type="taxonomic scope" value="Bacteria"/>
</dbReference>
<dbReference type="HOGENOM" id="CLU_015134_0_1_7"/>
<dbReference type="OrthoDB" id="9803734at2"/>
<dbReference type="BioCyc" id="HACI382638:HAC_RS00970-MONOMER"/>
<dbReference type="Proteomes" id="UP000000775">
    <property type="component" value="Chromosome"/>
</dbReference>
<dbReference type="GO" id="GO:0005886">
    <property type="term" value="C:plasma membrane"/>
    <property type="evidence" value="ECO:0007669"/>
    <property type="project" value="UniProtKB-SubCell"/>
</dbReference>
<dbReference type="GO" id="GO:0003954">
    <property type="term" value="F:NADH dehydrogenase activity"/>
    <property type="evidence" value="ECO:0007669"/>
    <property type="project" value="TreeGrafter"/>
</dbReference>
<dbReference type="GO" id="GO:0016655">
    <property type="term" value="F:oxidoreductase activity, acting on NAD(P)H, quinone or similar compound as acceptor"/>
    <property type="evidence" value="ECO:0007669"/>
    <property type="project" value="UniProtKB-UniRule"/>
</dbReference>
<dbReference type="GO" id="GO:0048038">
    <property type="term" value="F:quinone binding"/>
    <property type="evidence" value="ECO:0007669"/>
    <property type="project" value="UniProtKB-KW"/>
</dbReference>
<dbReference type="GO" id="GO:0009060">
    <property type="term" value="P:aerobic respiration"/>
    <property type="evidence" value="ECO:0007669"/>
    <property type="project" value="TreeGrafter"/>
</dbReference>
<dbReference type="HAMAP" id="MF_01350">
    <property type="entry name" value="NDH1_NuoH"/>
    <property type="match status" value="1"/>
</dbReference>
<dbReference type="InterPro" id="IPR001694">
    <property type="entry name" value="NADH_UbQ_OxRdtase_su1/FPO"/>
</dbReference>
<dbReference type="InterPro" id="IPR018086">
    <property type="entry name" value="NADH_UbQ_OxRdtase_su1_CS"/>
</dbReference>
<dbReference type="NCBIfam" id="NF004741">
    <property type="entry name" value="PRK06076.1-2"/>
    <property type="match status" value="1"/>
</dbReference>
<dbReference type="PANTHER" id="PTHR11432">
    <property type="entry name" value="NADH DEHYDROGENASE SUBUNIT 1"/>
    <property type="match status" value="1"/>
</dbReference>
<dbReference type="PANTHER" id="PTHR11432:SF3">
    <property type="entry name" value="NADH-UBIQUINONE OXIDOREDUCTASE CHAIN 1"/>
    <property type="match status" value="1"/>
</dbReference>
<dbReference type="Pfam" id="PF00146">
    <property type="entry name" value="NADHdh"/>
    <property type="match status" value="1"/>
</dbReference>
<dbReference type="PROSITE" id="PS00667">
    <property type="entry name" value="COMPLEX1_ND1_1"/>
    <property type="match status" value="1"/>
</dbReference>
<protein>
    <recommendedName>
        <fullName evidence="1">NADH-quinone oxidoreductase subunit H</fullName>
        <ecNumber evidence="1">7.1.1.-</ecNumber>
    </recommendedName>
    <alternativeName>
        <fullName evidence="1">NADH dehydrogenase I subunit H</fullName>
    </alternativeName>
    <alternativeName>
        <fullName evidence="1">NDH-1 subunit H</fullName>
    </alternativeName>
</protein>
<evidence type="ECO:0000255" key="1">
    <source>
        <dbReference type="HAMAP-Rule" id="MF_01350"/>
    </source>
</evidence>